<organism>
    <name type="scientific">Acidothermus cellulolyticus (strain ATCC 43068 / DSM 8971 / 11B)</name>
    <dbReference type="NCBI Taxonomy" id="351607"/>
    <lineage>
        <taxon>Bacteria</taxon>
        <taxon>Bacillati</taxon>
        <taxon>Actinomycetota</taxon>
        <taxon>Actinomycetes</taxon>
        <taxon>Acidothermales</taxon>
        <taxon>Acidothermaceae</taxon>
        <taxon>Acidothermus</taxon>
    </lineage>
</organism>
<evidence type="ECO:0000255" key="1">
    <source>
        <dbReference type="HAMAP-Rule" id="MF_01695"/>
    </source>
</evidence>
<reference key="1">
    <citation type="journal article" date="2009" name="Genome Res.">
        <title>Complete genome of the cellulolytic thermophile Acidothermus cellulolyticus 11B provides insights into its ecophysiological and evolutionary adaptations.</title>
        <authorList>
            <person name="Barabote R.D."/>
            <person name="Xie G."/>
            <person name="Leu D.H."/>
            <person name="Normand P."/>
            <person name="Necsulea A."/>
            <person name="Daubin V."/>
            <person name="Medigue C."/>
            <person name="Adney W.S."/>
            <person name="Xu X.C."/>
            <person name="Lapidus A."/>
            <person name="Parales R.E."/>
            <person name="Detter C."/>
            <person name="Pujic P."/>
            <person name="Bruce D."/>
            <person name="Lavire C."/>
            <person name="Challacombe J.F."/>
            <person name="Brettin T.S."/>
            <person name="Berry A.M."/>
        </authorList>
    </citation>
    <scope>NUCLEOTIDE SEQUENCE [LARGE SCALE GENOMIC DNA]</scope>
    <source>
        <strain>ATCC 43068 / DSM 8971 / 11B</strain>
    </source>
</reference>
<name>MSHA_ACIC1</name>
<keyword id="KW-0328">Glycosyltransferase</keyword>
<keyword id="KW-0460">Magnesium</keyword>
<keyword id="KW-0479">Metal-binding</keyword>
<keyword id="KW-1185">Reference proteome</keyword>
<keyword id="KW-0808">Transferase</keyword>
<dbReference type="EC" id="2.4.1.250" evidence="1"/>
<dbReference type="EMBL" id="CP000481">
    <property type="protein sequence ID" value="ABK51849.1"/>
    <property type="molecule type" value="Genomic_DNA"/>
</dbReference>
<dbReference type="RefSeq" id="WP_011718913.1">
    <property type="nucleotide sequence ID" value="NC_008578.1"/>
</dbReference>
<dbReference type="SMR" id="A0LQY9"/>
<dbReference type="FunCoup" id="A0LQY9">
    <property type="interactions" value="36"/>
</dbReference>
<dbReference type="STRING" id="351607.Acel_0073"/>
<dbReference type="CAZy" id="GT4">
    <property type="family name" value="Glycosyltransferase Family 4"/>
</dbReference>
<dbReference type="KEGG" id="ace:Acel_0073"/>
<dbReference type="eggNOG" id="COG0297">
    <property type="taxonomic scope" value="Bacteria"/>
</dbReference>
<dbReference type="HOGENOM" id="CLU_009583_2_3_11"/>
<dbReference type="InParanoid" id="A0LQY9"/>
<dbReference type="OrthoDB" id="9810929at2"/>
<dbReference type="Proteomes" id="UP000008221">
    <property type="component" value="Chromosome"/>
</dbReference>
<dbReference type="GO" id="GO:0008375">
    <property type="term" value="F:acetylglucosaminyltransferase activity"/>
    <property type="evidence" value="ECO:0007669"/>
    <property type="project" value="UniProtKB-UniRule"/>
</dbReference>
<dbReference type="GO" id="GO:0102710">
    <property type="term" value="F:D-inositol-3-phosphate glycosyltransferase activity"/>
    <property type="evidence" value="ECO:0007669"/>
    <property type="project" value="UniProtKB-EC"/>
</dbReference>
<dbReference type="GO" id="GO:0000287">
    <property type="term" value="F:magnesium ion binding"/>
    <property type="evidence" value="ECO:0007669"/>
    <property type="project" value="UniProtKB-UniRule"/>
</dbReference>
<dbReference type="GO" id="GO:0010125">
    <property type="term" value="P:mycothiol biosynthetic process"/>
    <property type="evidence" value="ECO:0007669"/>
    <property type="project" value="UniProtKB-UniRule"/>
</dbReference>
<dbReference type="Gene3D" id="3.40.50.2000">
    <property type="entry name" value="Glycogen Phosphorylase B"/>
    <property type="match status" value="2"/>
</dbReference>
<dbReference type="HAMAP" id="MF_01695">
    <property type="entry name" value="MshA"/>
    <property type="match status" value="1"/>
</dbReference>
<dbReference type="InterPro" id="IPR001296">
    <property type="entry name" value="Glyco_trans_1"/>
</dbReference>
<dbReference type="InterPro" id="IPR028098">
    <property type="entry name" value="Glyco_trans_4-like_N"/>
</dbReference>
<dbReference type="InterPro" id="IPR017814">
    <property type="entry name" value="Mycothiol_biosynthesis_MshA"/>
</dbReference>
<dbReference type="NCBIfam" id="TIGR03449">
    <property type="entry name" value="mycothiol_MshA"/>
    <property type="match status" value="1"/>
</dbReference>
<dbReference type="PANTHER" id="PTHR12526:SF510">
    <property type="entry name" value="D-INOSITOL 3-PHOSPHATE GLYCOSYLTRANSFERASE"/>
    <property type="match status" value="1"/>
</dbReference>
<dbReference type="PANTHER" id="PTHR12526">
    <property type="entry name" value="GLYCOSYLTRANSFERASE"/>
    <property type="match status" value="1"/>
</dbReference>
<dbReference type="Pfam" id="PF13579">
    <property type="entry name" value="Glyco_trans_4_4"/>
    <property type="match status" value="1"/>
</dbReference>
<dbReference type="Pfam" id="PF00534">
    <property type="entry name" value="Glycos_transf_1"/>
    <property type="match status" value="1"/>
</dbReference>
<dbReference type="SUPFAM" id="SSF53756">
    <property type="entry name" value="UDP-Glycosyltransferase/glycogen phosphorylase"/>
    <property type="match status" value="1"/>
</dbReference>
<comment type="function">
    <text evidence="1">Catalyzes the transfer of a N-acetyl-glucosamine moiety to 1D-myo-inositol 3-phosphate to produce 1D-myo-inositol 2-acetamido-2-deoxy-glucopyranoside 3-phosphate in the mycothiol biosynthesis pathway.</text>
</comment>
<comment type="catalytic activity">
    <reaction evidence="1">
        <text>1D-myo-inositol 3-phosphate + UDP-N-acetyl-alpha-D-glucosamine = 1D-myo-inositol 2-acetamido-2-deoxy-alpha-D-glucopyranoside 3-phosphate + UDP + H(+)</text>
        <dbReference type="Rhea" id="RHEA:26188"/>
        <dbReference type="ChEBI" id="CHEBI:15378"/>
        <dbReference type="ChEBI" id="CHEBI:57705"/>
        <dbReference type="ChEBI" id="CHEBI:58223"/>
        <dbReference type="ChEBI" id="CHEBI:58401"/>
        <dbReference type="ChEBI" id="CHEBI:58892"/>
        <dbReference type="EC" id="2.4.1.250"/>
    </reaction>
</comment>
<comment type="subunit">
    <text evidence="1">Homodimer.</text>
</comment>
<comment type="similarity">
    <text evidence="1">Belongs to the glycosyltransferase group 1 family. MshA subfamily.</text>
</comment>
<feature type="chain" id="PRO_0000400107" description="D-inositol 3-phosphate glycosyltransferase">
    <location>
        <begin position="1"/>
        <end position="448"/>
    </location>
</feature>
<feature type="binding site" evidence="1">
    <location>
        <position position="35"/>
    </location>
    <ligand>
        <name>1D-myo-inositol 3-phosphate</name>
        <dbReference type="ChEBI" id="CHEBI:58401"/>
    </ligand>
</feature>
<feature type="binding site" evidence="1">
    <location>
        <begin position="46"/>
        <end position="51"/>
    </location>
    <ligand>
        <name>1D-myo-inositol 3-phosphate</name>
        <dbReference type="ChEBI" id="CHEBI:58401"/>
    </ligand>
</feature>
<feature type="binding site" evidence="1">
    <location>
        <position position="49"/>
    </location>
    <ligand>
        <name>UDP-N-acetyl-alpha-D-glucosamine</name>
        <dbReference type="ChEBI" id="CHEBI:57705"/>
    </ligand>
</feature>
<feature type="binding site" evidence="1">
    <location>
        <position position="104"/>
    </location>
    <ligand>
        <name>1D-myo-inositol 3-phosphate</name>
        <dbReference type="ChEBI" id="CHEBI:58401"/>
    </ligand>
</feature>
<feature type="binding site" evidence="1">
    <location>
        <position position="137"/>
    </location>
    <ligand>
        <name>1D-myo-inositol 3-phosphate</name>
        <dbReference type="ChEBI" id="CHEBI:58401"/>
    </ligand>
</feature>
<feature type="binding site" evidence="1">
    <location>
        <position position="161"/>
    </location>
    <ligand>
        <name>1D-myo-inositol 3-phosphate</name>
        <dbReference type="ChEBI" id="CHEBI:58401"/>
    </ligand>
</feature>
<feature type="binding site" evidence="1">
    <location>
        <position position="181"/>
    </location>
    <ligand>
        <name>1D-myo-inositol 3-phosphate</name>
        <dbReference type="ChEBI" id="CHEBI:58401"/>
    </ligand>
</feature>
<feature type="binding site" evidence="1">
    <location>
        <position position="255"/>
    </location>
    <ligand>
        <name>UDP-N-acetyl-alpha-D-glucosamine</name>
        <dbReference type="ChEBI" id="CHEBI:57705"/>
    </ligand>
</feature>
<feature type="binding site" evidence="1">
    <location>
        <position position="260"/>
    </location>
    <ligand>
        <name>UDP-N-acetyl-alpha-D-glucosamine</name>
        <dbReference type="ChEBI" id="CHEBI:57705"/>
    </ligand>
</feature>
<feature type="binding site" evidence="1">
    <location>
        <position position="321"/>
    </location>
    <ligand>
        <name>UDP-N-acetyl-alpha-D-glucosamine</name>
        <dbReference type="ChEBI" id="CHEBI:57705"/>
    </ligand>
</feature>
<feature type="binding site" evidence="1">
    <location>
        <position position="330"/>
    </location>
    <ligand>
        <name>Mg(2+)</name>
        <dbReference type="ChEBI" id="CHEBI:18420"/>
    </ligand>
</feature>
<feature type="binding site" evidence="1">
    <location>
        <position position="331"/>
    </location>
    <ligand>
        <name>Mg(2+)</name>
        <dbReference type="ChEBI" id="CHEBI:18420"/>
    </ligand>
</feature>
<feature type="binding site" evidence="1">
    <location>
        <position position="333"/>
    </location>
    <ligand>
        <name>Mg(2+)</name>
        <dbReference type="ChEBI" id="CHEBI:18420"/>
    </ligand>
</feature>
<feature type="binding site" evidence="1">
    <location>
        <position position="343"/>
    </location>
    <ligand>
        <name>UDP-N-acetyl-alpha-D-glucosamine</name>
        <dbReference type="ChEBI" id="CHEBI:57705"/>
    </ligand>
</feature>
<feature type="binding site" evidence="1">
    <location>
        <position position="351"/>
    </location>
    <ligand>
        <name>UDP-N-acetyl-alpha-D-glucosamine</name>
        <dbReference type="ChEBI" id="CHEBI:57705"/>
    </ligand>
</feature>
<feature type="binding site" evidence="1">
    <location>
        <position position="357"/>
    </location>
    <ligand>
        <name>Mg(2+)</name>
        <dbReference type="ChEBI" id="CHEBI:18420"/>
    </ligand>
</feature>
<sequence length="448" mass="48018">MPRWLSAPEHARHRTVAASAGAPWTPRRVAMIAVHTSPLEIPGCGDAGGLNVYVAQIARRLASRGIDVDVFTRATRRDLPPQQRLAPGVTVRNVVAGPLEPLPKDELPVHLCAFTAAVLRAEAMREPGWYDVIHSHYWLSGEVGRVASQRWGVPLVHTMHTLAKVKNAALAEGDVPEPGRRVIGEADVVAAADRLVTNTWTEARQLVDLYGAEPDRIRVVPPGVETAIFRPGDSARARRRLGLPIDGCVVLFVGRLQPLKGPDIAVRAAAEFLSTHPGMRSTFRLVIVGGPSGSRSTEPERLRALAADLGVADAVIFAPPMPPDRLVEFYRAATVTIVPSHSESFGLVALESQACGTPVVAARVGGLTTAVRDGESGLLVDGHDPARYAGAIGRLLDPGLRAELVRGAVAHAMRFHWDNTVEGILGVYRDALAERRTAATQRLASRVG</sequence>
<gene>
    <name evidence="1" type="primary">mshA</name>
    <name type="ordered locus">Acel_0073</name>
</gene>
<proteinExistence type="inferred from homology"/>
<protein>
    <recommendedName>
        <fullName>D-inositol 3-phosphate glycosyltransferase</fullName>
        <ecNumber evidence="1">2.4.1.250</ecNumber>
    </recommendedName>
    <alternativeName>
        <fullName evidence="1">N-acetylglucosamine-inositol-phosphate N-acetylglucosaminyltransferase</fullName>
        <shortName evidence="1">GlcNAc-Ins-P N-acetylglucosaminyltransferase</shortName>
    </alternativeName>
</protein>
<accession>A0LQY9</accession>